<organism>
    <name type="scientific">Buchnera aphidicola subsp. Baizongia pistaciae (strain Bp)</name>
    <dbReference type="NCBI Taxonomy" id="224915"/>
    <lineage>
        <taxon>Bacteria</taxon>
        <taxon>Pseudomonadati</taxon>
        <taxon>Pseudomonadota</taxon>
        <taxon>Gammaproteobacteria</taxon>
        <taxon>Enterobacterales</taxon>
        <taxon>Erwiniaceae</taxon>
        <taxon>Buchnera</taxon>
    </lineage>
</organism>
<keyword id="KW-0106">Calcium</keyword>
<keyword id="KW-0460">Magnesium</keyword>
<keyword id="KW-0479">Metal-binding</keyword>
<keyword id="KW-1185">Reference proteome</keyword>
<keyword id="KW-0786">Thiamine pyrophosphate</keyword>
<keyword id="KW-0808">Transferase</keyword>
<comment type="function">
    <text evidence="1">Catalyzes the transfer of a two-carbon ketol group from a ketose donor to an aldose acceptor, via a covalent intermediate with the cofactor thiamine pyrophosphate.</text>
</comment>
<comment type="catalytic activity">
    <reaction>
        <text>D-sedoheptulose 7-phosphate + D-glyceraldehyde 3-phosphate = aldehydo-D-ribose 5-phosphate + D-xylulose 5-phosphate</text>
        <dbReference type="Rhea" id="RHEA:10508"/>
        <dbReference type="ChEBI" id="CHEBI:57483"/>
        <dbReference type="ChEBI" id="CHEBI:57737"/>
        <dbReference type="ChEBI" id="CHEBI:58273"/>
        <dbReference type="ChEBI" id="CHEBI:59776"/>
        <dbReference type="EC" id="2.2.1.1"/>
    </reaction>
</comment>
<comment type="cofactor">
    <cofactor evidence="1">
        <name>Mg(2+)</name>
        <dbReference type="ChEBI" id="CHEBI:18420"/>
    </cofactor>
    <cofactor evidence="1">
        <name>Ca(2+)</name>
        <dbReference type="ChEBI" id="CHEBI:29108"/>
    </cofactor>
    <cofactor evidence="1">
        <name>Mn(2+)</name>
        <dbReference type="ChEBI" id="CHEBI:29035"/>
    </cofactor>
    <cofactor evidence="1">
        <name>Co(2+)</name>
        <dbReference type="ChEBI" id="CHEBI:48828"/>
    </cofactor>
    <text evidence="1">Binds 1 Mg(2+) ion per subunit. Can also utilize other divalent metal cations, such as Ca(2+), Mn(2+) and Co(2+).</text>
</comment>
<comment type="cofactor">
    <cofactor evidence="1">
        <name>thiamine diphosphate</name>
        <dbReference type="ChEBI" id="CHEBI:58937"/>
    </cofactor>
    <text evidence="1">Binds 1 thiamine pyrophosphate per subunit.</text>
</comment>
<comment type="subunit">
    <text evidence="1">Homodimer.</text>
</comment>
<comment type="similarity">
    <text evidence="2">Belongs to the transketolase family.</text>
</comment>
<evidence type="ECO:0000250" key="1"/>
<evidence type="ECO:0000305" key="2"/>
<gene>
    <name type="primary">tkt</name>
    <name type="ordered locus">bbp_088</name>
</gene>
<feature type="chain" id="PRO_0000191855" description="Transketolase">
    <location>
        <begin position="1"/>
        <end position="666"/>
    </location>
</feature>
<feature type="active site" description="Proton donor" evidence="1">
    <location>
        <position position="411"/>
    </location>
</feature>
<feature type="binding site" evidence="1">
    <location>
        <position position="26"/>
    </location>
    <ligand>
        <name>substrate</name>
    </ligand>
</feature>
<feature type="binding site" evidence="1">
    <location>
        <position position="66"/>
    </location>
    <ligand>
        <name>thiamine diphosphate</name>
        <dbReference type="ChEBI" id="CHEBI:58937"/>
    </ligand>
</feature>
<feature type="binding site" evidence="1">
    <location>
        <begin position="114"/>
        <end position="116"/>
    </location>
    <ligand>
        <name>thiamine diphosphate</name>
        <dbReference type="ChEBI" id="CHEBI:58937"/>
    </ligand>
</feature>
<feature type="binding site" evidence="1">
    <location>
        <position position="155"/>
    </location>
    <ligand>
        <name>Mg(2+)</name>
        <dbReference type="ChEBI" id="CHEBI:18420"/>
    </ligand>
</feature>
<feature type="binding site" evidence="1">
    <location>
        <position position="156"/>
    </location>
    <ligand>
        <name>thiamine diphosphate</name>
        <dbReference type="ChEBI" id="CHEBI:58937"/>
    </ligand>
</feature>
<feature type="binding site" evidence="1">
    <location>
        <position position="185"/>
    </location>
    <ligand>
        <name>Mg(2+)</name>
        <dbReference type="ChEBI" id="CHEBI:18420"/>
    </ligand>
</feature>
<feature type="binding site" evidence="1">
    <location>
        <position position="185"/>
    </location>
    <ligand>
        <name>thiamine diphosphate</name>
        <dbReference type="ChEBI" id="CHEBI:58937"/>
    </ligand>
</feature>
<feature type="binding site" evidence="1">
    <location>
        <position position="187"/>
    </location>
    <ligand>
        <name>Mg(2+)</name>
        <dbReference type="ChEBI" id="CHEBI:18420"/>
    </ligand>
</feature>
<feature type="binding site" evidence="1">
    <location>
        <position position="261"/>
    </location>
    <ligand>
        <name>substrate</name>
    </ligand>
</feature>
<feature type="binding site" evidence="1">
    <location>
        <position position="261"/>
    </location>
    <ligand>
        <name>thiamine diphosphate</name>
        <dbReference type="ChEBI" id="CHEBI:58937"/>
    </ligand>
</feature>
<feature type="binding site" evidence="1">
    <location>
        <position position="358"/>
    </location>
    <ligand>
        <name>substrate</name>
    </ligand>
</feature>
<feature type="binding site" evidence="1">
    <location>
        <position position="385"/>
    </location>
    <ligand>
        <name>substrate</name>
    </ligand>
</feature>
<feature type="binding site" evidence="1">
    <location>
        <position position="437"/>
    </location>
    <ligand>
        <name>thiamine diphosphate</name>
        <dbReference type="ChEBI" id="CHEBI:58937"/>
    </ligand>
</feature>
<feature type="binding site" evidence="1">
    <location>
        <position position="461"/>
    </location>
    <ligand>
        <name>substrate</name>
    </ligand>
</feature>
<feature type="binding site" evidence="1">
    <location>
        <position position="469"/>
    </location>
    <ligand>
        <name>substrate</name>
    </ligand>
</feature>
<feature type="binding site" evidence="1">
    <location>
        <position position="520"/>
    </location>
    <ligand>
        <name>substrate</name>
    </ligand>
</feature>
<feature type="site" description="Important for catalytic activity" evidence="1">
    <location>
        <position position="26"/>
    </location>
</feature>
<feature type="site" description="Important for catalytic activity" evidence="1">
    <location>
        <position position="261"/>
    </location>
</feature>
<name>TKT_BUCBP</name>
<proteinExistence type="inferred from homology"/>
<sequence length="666" mass="74383">MCLRRKLANAIRALSIDAVQEAQSGHPGMPMGMADIAEVLWREFFKHNPKNPLWNNRDRFILSNGHGSMLLYSILHLTGYKLSIDDLKKFRQLGSNTPGHPEIGSTPGVEMTTGPLGQGLGAAVGMAIAERTLASTFNKPNYDIVDHYTWVFVGDGCLMEGISHEVCSLAGTFGLGKLIVFYDSNGISIDGKVEEWFTDDTENRFKAYNWHVVSNVDGHDYRSISSAIKDAILVKNKPSLIICKTIIGYGSPNKSGLETSHGAPLGENEVLLTKQKLGWTYPPFVIPQDVYDHWNFNLQGVILENEWNKKFQGYYNKYPDLANEYLRRISKNVPDKFVDNFNKFIKELYLCPKNIATRVASQNVLEFLGKSLPELIGGSADLAPSNLTMWSKSKSIKQDISGNYVHYGVREFGMTAISNGIAHYGGFIPYVATFLAFMDYARSAVRMSALMKTQNIFIYSHDSIGLGEDGPTHQPIEQLSALRFIPNVNVWRPCDQLETAIAWKNAIERKDGPTALILSRQILCQIDRSQEQINDIYRGGYIVNTTVRSPKVIIVATGSEVKIALDVSNILFKKGILVRVVSMPSTNVFDQQDNDYKEFIFPRCLVHRVAIEAGISDFWYKYVGLTGCIIGIDTFGESGSSDQLFSKFGFNSDIISEKIISYLKSS</sequence>
<dbReference type="EC" id="2.2.1.1"/>
<dbReference type="EMBL" id="AE016826">
    <property type="protein sequence ID" value="AAO26823.1"/>
    <property type="molecule type" value="Genomic_DNA"/>
</dbReference>
<dbReference type="RefSeq" id="WP_011091224.1">
    <property type="nucleotide sequence ID" value="NC_004545.1"/>
</dbReference>
<dbReference type="SMR" id="Q89AY2"/>
<dbReference type="STRING" id="224915.bbp_088"/>
<dbReference type="KEGG" id="bab:bbp_088"/>
<dbReference type="eggNOG" id="COG0021">
    <property type="taxonomic scope" value="Bacteria"/>
</dbReference>
<dbReference type="HOGENOM" id="CLU_009227_0_0_6"/>
<dbReference type="OrthoDB" id="8732661at2"/>
<dbReference type="Proteomes" id="UP000000601">
    <property type="component" value="Chromosome"/>
</dbReference>
<dbReference type="GO" id="GO:0005829">
    <property type="term" value="C:cytosol"/>
    <property type="evidence" value="ECO:0007669"/>
    <property type="project" value="TreeGrafter"/>
</dbReference>
<dbReference type="GO" id="GO:0046872">
    <property type="term" value="F:metal ion binding"/>
    <property type="evidence" value="ECO:0007669"/>
    <property type="project" value="UniProtKB-KW"/>
</dbReference>
<dbReference type="GO" id="GO:0004802">
    <property type="term" value="F:transketolase activity"/>
    <property type="evidence" value="ECO:0007669"/>
    <property type="project" value="UniProtKB-EC"/>
</dbReference>
<dbReference type="GO" id="GO:0006098">
    <property type="term" value="P:pentose-phosphate shunt"/>
    <property type="evidence" value="ECO:0007669"/>
    <property type="project" value="TreeGrafter"/>
</dbReference>
<dbReference type="CDD" id="cd07033">
    <property type="entry name" value="TPP_PYR_DXS_TK_like"/>
    <property type="match status" value="1"/>
</dbReference>
<dbReference type="CDD" id="cd02012">
    <property type="entry name" value="TPP_TK"/>
    <property type="match status" value="1"/>
</dbReference>
<dbReference type="FunFam" id="3.40.50.920:FF:000003">
    <property type="entry name" value="Transketolase"/>
    <property type="match status" value="1"/>
</dbReference>
<dbReference type="FunFam" id="3.40.50.970:FF:000003">
    <property type="entry name" value="Transketolase"/>
    <property type="match status" value="1"/>
</dbReference>
<dbReference type="FunFam" id="3.40.50.970:FF:000004">
    <property type="entry name" value="Transketolase"/>
    <property type="match status" value="1"/>
</dbReference>
<dbReference type="Gene3D" id="3.40.50.920">
    <property type="match status" value="1"/>
</dbReference>
<dbReference type="Gene3D" id="3.40.50.970">
    <property type="match status" value="2"/>
</dbReference>
<dbReference type="InterPro" id="IPR029061">
    <property type="entry name" value="THDP-binding"/>
</dbReference>
<dbReference type="InterPro" id="IPR009014">
    <property type="entry name" value="Transketo_C/PFOR_II"/>
</dbReference>
<dbReference type="InterPro" id="IPR055152">
    <property type="entry name" value="Transketolase-like_C_2"/>
</dbReference>
<dbReference type="InterPro" id="IPR005475">
    <property type="entry name" value="Transketolase-like_Pyr-bd"/>
</dbReference>
<dbReference type="InterPro" id="IPR005478">
    <property type="entry name" value="Transketolase_bac-like"/>
</dbReference>
<dbReference type="InterPro" id="IPR020826">
    <property type="entry name" value="Transketolase_BS"/>
</dbReference>
<dbReference type="InterPro" id="IPR049557">
    <property type="entry name" value="Transketolase_CS"/>
</dbReference>
<dbReference type="InterPro" id="IPR033247">
    <property type="entry name" value="Transketolase_fam"/>
</dbReference>
<dbReference type="InterPro" id="IPR005474">
    <property type="entry name" value="Transketolase_N"/>
</dbReference>
<dbReference type="NCBIfam" id="TIGR00232">
    <property type="entry name" value="tktlase_bact"/>
    <property type="match status" value="1"/>
</dbReference>
<dbReference type="PANTHER" id="PTHR43522">
    <property type="entry name" value="TRANSKETOLASE"/>
    <property type="match status" value="1"/>
</dbReference>
<dbReference type="PANTHER" id="PTHR43522:SF2">
    <property type="entry name" value="TRANSKETOLASE 1-RELATED"/>
    <property type="match status" value="1"/>
</dbReference>
<dbReference type="Pfam" id="PF02779">
    <property type="entry name" value="Transket_pyr"/>
    <property type="match status" value="1"/>
</dbReference>
<dbReference type="Pfam" id="PF22613">
    <property type="entry name" value="Transketolase_C_1"/>
    <property type="match status" value="1"/>
</dbReference>
<dbReference type="Pfam" id="PF00456">
    <property type="entry name" value="Transketolase_N"/>
    <property type="match status" value="1"/>
</dbReference>
<dbReference type="SMART" id="SM00861">
    <property type="entry name" value="Transket_pyr"/>
    <property type="match status" value="1"/>
</dbReference>
<dbReference type="SUPFAM" id="SSF52518">
    <property type="entry name" value="Thiamin diphosphate-binding fold (THDP-binding)"/>
    <property type="match status" value="2"/>
</dbReference>
<dbReference type="SUPFAM" id="SSF52922">
    <property type="entry name" value="TK C-terminal domain-like"/>
    <property type="match status" value="1"/>
</dbReference>
<dbReference type="PROSITE" id="PS00801">
    <property type="entry name" value="TRANSKETOLASE_1"/>
    <property type="match status" value="1"/>
</dbReference>
<dbReference type="PROSITE" id="PS00802">
    <property type="entry name" value="TRANSKETOLASE_2"/>
    <property type="match status" value="1"/>
</dbReference>
<reference key="1">
    <citation type="journal article" date="2003" name="Proc. Natl. Acad. Sci. U.S.A.">
        <title>Reductive genome evolution in Buchnera aphidicola.</title>
        <authorList>
            <person name="van Ham R.C.H.J."/>
            <person name="Kamerbeek J."/>
            <person name="Palacios C."/>
            <person name="Rausell C."/>
            <person name="Abascal F."/>
            <person name="Bastolla U."/>
            <person name="Fernandez J.M."/>
            <person name="Jimenez L."/>
            <person name="Postigo M."/>
            <person name="Silva F.J."/>
            <person name="Tamames J."/>
            <person name="Viguera E."/>
            <person name="Latorre A."/>
            <person name="Valencia A."/>
            <person name="Moran F."/>
            <person name="Moya A."/>
        </authorList>
    </citation>
    <scope>NUCLEOTIDE SEQUENCE [LARGE SCALE GENOMIC DNA]</scope>
    <source>
        <strain>Bp</strain>
    </source>
</reference>
<protein>
    <recommendedName>
        <fullName>Transketolase</fullName>
        <shortName>TK</shortName>
        <ecNumber>2.2.1.1</ecNumber>
    </recommendedName>
</protein>
<accession>Q89AY2</accession>